<feature type="chain" id="PRO_0000410526" description="Uncharacterized protein 044R">
    <location>
        <begin position="1"/>
        <end position="61"/>
    </location>
</feature>
<dbReference type="EMBL" id="AY548484">
    <property type="protein sequence ID" value="AAT09746.1"/>
    <property type="molecule type" value="Genomic_DNA"/>
</dbReference>
<dbReference type="RefSeq" id="YP_031665.1">
    <property type="nucleotide sequence ID" value="NC_005946.1"/>
</dbReference>
<dbReference type="KEGG" id="vg:2947805"/>
<dbReference type="Proteomes" id="UP000008770">
    <property type="component" value="Segment"/>
</dbReference>
<proteinExistence type="predicted"/>
<protein>
    <recommendedName>
        <fullName>Uncharacterized protein 044R</fullName>
    </recommendedName>
</protein>
<gene>
    <name type="ORF">FV3-044R</name>
</gene>
<organism>
    <name type="scientific">Frog virus 3 (isolate Goorha)</name>
    <name type="common">FV-3</name>
    <dbReference type="NCBI Taxonomy" id="654924"/>
    <lineage>
        <taxon>Viruses</taxon>
        <taxon>Varidnaviria</taxon>
        <taxon>Bamfordvirae</taxon>
        <taxon>Nucleocytoviricota</taxon>
        <taxon>Megaviricetes</taxon>
        <taxon>Pimascovirales</taxon>
        <taxon>Iridoviridae</taxon>
        <taxon>Alphairidovirinae</taxon>
        <taxon>Ranavirus</taxon>
        <taxon>Frog virus 3</taxon>
    </lineage>
</organism>
<accession>Q6GZN9</accession>
<reference key="1">
    <citation type="journal article" date="2004" name="Virology">
        <title>Comparative genomic analyses of frog virus 3, type species of the genus Ranavirus (family Iridoviridae).</title>
        <authorList>
            <person name="Tan W.G."/>
            <person name="Barkman T.J."/>
            <person name="Gregory Chinchar V."/>
            <person name="Essani K."/>
        </authorList>
    </citation>
    <scope>NUCLEOTIDE SEQUENCE [LARGE SCALE GENOMIC DNA]</scope>
</reference>
<name>044R_FRG3G</name>
<sequence>MVVRLAVRANMPKDSLARDSLPKDSLARDFLSDKTSPTDGTQSSDRYLLKIVTAVDYVHLT</sequence>
<keyword id="KW-1185">Reference proteome</keyword>
<organismHost>
    <name type="scientific">Dryophytes versicolor</name>
    <name type="common">chameleon treefrog</name>
    <dbReference type="NCBI Taxonomy" id="30343"/>
</organismHost>
<organismHost>
    <name type="scientific">Lithobates pipiens</name>
    <name type="common">Northern leopard frog</name>
    <name type="synonym">Rana pipiens</name>
    <dbReference type="NCBI Taxonomy" id="8404"/>
</organismHost>
<organismHost>
    <name type="scientific">Lithobates sylvaticus</name>
    <name type="common">Wood frog</name>
    <name type="synonym">Rana sylvatica</name>
    <dbReference type="NCBI Taxonomy" id="45438"/>
</organismHost>
<organismHost>
    <name type="scientific">Notophthalmus viridescens</name>
    <name type="common">Eastern newt</name>
    <name type="synonym">Triturus viridescens</name>
    <dbReference type="NCBI Taxonomy" id="8316"/>
</organismHost>